<proteinExistence type="evidence at protein level"/>
<keyword id="KW-0002">3D-structure</keyword>
<keyword id="KW-0120">Carbon dioxide fixation</keyword>
<keyword id="KW-0456">Lyase</keyword>
<keyword id="KW-0460">Magnesium</keyword>
<keyword id="KW-1185">Reference proteome</keyword>
<feature type="chain" id="PRO_0000309593" description="Phosphoenolpyruvate carboxylase">
    <location>
        <begin position="1"/>
        <end position="537"/>
    </location>
</feature>
<feature type="strand" evidence="3">
    <location>
        <begin position="5"/>
        <end position="8"/>
    </location>
</feature>
<feature type="turn" evidence="3">
    <location>
        <begin position="21"/>
        <end position="23"/>
    </location>
</feature>
<feature type="helix" evidence="3">
    <location>
        <begin position="24"/>
        <end position="31"/>
    </location>
</feature>
<feature type="helix" evidence="3">
    <location>
        <begin position="35"/>
        <end position="37"/>
    </location>
</feature>
<feature type="strand" evidence="3">
    <location>
        <begin position="44"/>
        <end position="48"/>
    </location>
</feature>
<feature type="strand" evidence="3">
    <location>
        <begin position="50"/>
        <end position="52"/>
    </location>
</feature>
<feature type="helix" evidence="3">
    <location>
        <begin position="58"/>
        <end position="67"/>
    </location>
</feature>
<feature type="turn" evidence="3">
    <location>
        <begin position="68"/>
        <end position="70"/>
    </location>
</feature>
<feature type="turn" evidence="3">
    <location>
        <begin position="73"/>
        <end position="75"/>
    </location>
</feature>
<feature type="strand" evidence="3">
    <location>
        <begin position="76"/>
        <end position="82"/>
    </location>
</feature>
<feature type="turn" evidence="3">
    <location>
        <begin position="86"/>
        <end position="88"/>
    </location>
</feature>
<feature type="helix" evidence="3">
    <location>
        <begin position="91"/>
        <end position="112"/>
    </location>
</feature>
<feature type="strand" evidence="3">
    <location>
        <begin position="119"/>
        <end position="124"/>
    </location>
</feature>
<feature type="helix" evidence="3">
    <location>
        <begin position="128"/>
        <end position="148"/>
    </location>
</feature>
<feature type="strand" evidence="3">
    <location>
        <begin position="157"/>
        <end position="164"/>
    </location>
</feature>
<feature type="helix" evidence="3">
    <location>
        <begin position="167"/>
        <end position="171"/>
    </location>
</feature>
<feature type="helix" evidence="3">
    <location>
        <begin position="174"/>
        <end position="186"/>
    </location>
</feature>
<feature type="strand" evidence="3">
    <location>
        <begin position="192"/>
        <end position="200"/>
    </location>
</feature>
<feature type="helix" evidence="3">
    <location>
        <begin position="201"/>
        <end position="207"/>
    </location>
</feature>
<feature type="helix" evidence="3">
    <location>
        <begin position="209"/>
        <end position="230"/>
    </location>
</feature>
<feature type="strand" evidence="3">
    <location>
        <begin position="233"/>
        <end position="239"/>
    </location>
</feature>
<feature type="helix" evidence="3">
    <location>
        <begin position="244"/>
        <end position="246"/>
    </location>
</feature>
<feature type="helix" evidence="3">
    <location>
        <begin position="254"/>
        <end position="260"/>
    </location>
</feature>
<feature type="turn" evidence="3">
    <location>
        <begin position="261"/>
        <end position="263"/>
    </location>
</feature>
<feature type="strand" evidence="3">
    <location>
        <begin position="266"/>
        <end position="269"/>
    </location>
</feature>
<feature type="helix" evidence="3">
    <location>
        <begin position="271"/>
        <end position="275"/>
    </location>
</feature>
<feature type="helix" evidence="3">
    <location>
        <begin position="279"/>
        <end position="292"/>
    </location>
</feature>
<feature type="helix" evidence="3">
    <location>
        <begin position="293"/>
        <end position="295"/>
    </location>
</feature>
<feature type="helix" evidence="3">
    <location>
        <begin position="303"/>
        <end position="335"/>
    </location>
</feature>
<feature type="strand" evidence="3">
    <location>
        <begin position="356"/>
        <end position="358"/>
    </location>
</feature>
<feature type="helix" evidence="3">
    <location>
        <begin position="361"/>
        <end position="365"/>
    </location>
</feature>
<feature type="helix" evidence="3">
    <location>
        <begin position="371"/>
        <end position="378"/>
    </location>
</feature>
<feature type="helix" evidence="3">
    <location>
        <begin position="391"/>
        <end position="400"/>
    </location>
</feature>
<feature type="helix" evidence="3">
    <location>
        <begin position="405"/>
        <end position="407"/>
    </location>
</feature>
<feature type="helix" evidence="3">
    <location>
        <begin position="410"/>
        <end position="421"/>
    </location>
</feature>
<feature type="helix" evidence="3">
    <location>
        <begin position="423"/>
        <end position="432"/>
    </location>
</feature>
<feature type="helix" evidence="3">
    <location>
        <begin position="436"/>
        <end position="444"/>
    </location>
</feature>
<feature type="turn" evidence="3">
    <location>
        <begin position="449"/>
        <end position="455"/>
    </location>
</feature>
<feature type="helix" evidence="3">
    <location>
        <begin position="458"/>
        <end position="474"/>
    </location>
</feature>
<feature type="helix" evidence="3">
    <location>
        <begin position="481"/>
        <end position="487"/>
    </location>
</feature>
<feature type="helix" evidence="3">
    <location>
        <begin position="489"/>
        <end position="506"/>
    </location>
</feature>
<feature type="helix" evidence="3">
    <location>
        <begin position="509"/>
        <end position="514"/>
    </location>
</feature>
<feature type="helix" evidence="3">
    <location>
        <begin position="516"/>
        <end position="533"/>
    </location>
</feature>
<reference key="1">
    <citation type="journal article" date="2002" name="Proc. Natl. Acad. Sci. U.S.A.">
        <title>Complete genome sequence of Clostridium perfringens, an anaerobic flesh-eater.</title>
        <authorList>
            <person name="Shimizu T."/>
            <person name="Ohtani K."/>
            <person name="Hirakawa H."/>
            <person name="Ohshima K."/>
            <person name="Yamashita A."/>
            <person name="Shiba T."/>
            <person name="Ogasawara N."/>
            <person name="Hattori M."/>
            <person name="Kuhara S."/>
            <person name="Hayashi H."/>
        </authorList>
    </citation>
    <scope>NUCLEOTIDE SEQUENCE [LARGE SCALE GENOMIC DNA]</scope>
    <source>
        <strain>13 / Type A</strain>
    </source>
</reference>
<reference key="2">
    <citation type="journal article" date="2009" name="Acta Crystallogr. F">
        <title>Expression, purification and crystallization of an archaeal-type phosphoenolpyruvate carboxylase.</title>
        <authorList>
            <person name="Dharmarajan L."/>
            <person name="Kraszewski J.L."/>
            <person name="Mukhopadhyay B."/>
            <person name="Dunten P.W."/>
        </authorList>
    </citation>
    <scope>FUNCTION</scope>
    <scope>CATALYTIC ACTIVITY</scope>
    <scope>SUBUNIT</scope>
    <scope>CRYSTALLIZATION</scope>
    <source>
        <strain>13 / Type A</strain>
    </source>
</reference>
<organism>
    <name type="scientific">Clostridium perfringens (strain 13 / Type A)</name>
    <dbReference type="NCBI Taxonomy" id="195102"/>
    <lineage>
        <taxon>Bacteria</taxon>
        <taxon>Bacillati</taxon>
        <taxon>Bacillota</taxon>
        <taxon>Clostridia</taxon>
        <taxon>Eubacteriales</taxon>
        <taxon>Clostridiaceae</taxon>
        <taxon>Clostridium</taxon>
    </lineage>
</organism>
<protein>
    <recommendedName>
        <fullName evidence="1">Phosphoenolpyruvate carboxylase</fullName>
        <shortName evidence="1">PEPC</shortName>
        <shortName evidence="1">PEPCase</shortName>
        <ecNumber evidence="1">4.1.1.31</ecNumber>
    </recommendedName>
</protein>
<gene>
    <name evidence="1" type="primary">ppcA</name>
    <name type="ordered locus">CPE1094</name>
</gene>
<dbReference type="EC" id="4.1.1.31" evidence="1"/>
<dbReference type="EMBL" id="BA000016">
    <property type="protein sequence ID" value="BAB80800.1"/>
    <property type="molecule type" value="Genomic_DNA"/>
</dbReference>
<dbReference type="RefSeq" id="WP_011010232.1">
    <property type="nucleotide sequence ID" value="NC_003366.1"/>
</dbReference>
<dbReference type="PDB" id="3ODM">
    <property type="method" value="X-ray"/>
    <property type="resolution" value="2.95 A"/>
    <property type="chains" value="A/B/C/D/E/F/G/H=1-537"/>
</dbReference>
<dbReference type="PDBsum" id="3ODM"/>
<dbReference type="SMR" id="Q8XLE8"/>
<dbReference type="STRING" id="195102.gene:10490357"/>
<dbReference type="GeneID" id="93002338"/>
<dbReference type="KEGG" id="cpe:CPE1094"/>
<dbReference type="HOGENOM" id="CLU_517433_0_0_9"/>
<dbReference type="BRENDA" id="4.1.1.31">
    <property type="organism ID" value="1503"/>
</dbReference>
<dbReference type="EvolutionaryTrace" id="Q8XLE8"/>
<dbReference type="Proteomes" id="UP000000818">
    <property type="component" value="Chromosome"/>
</dbReference>
<dbReference type="GO" id="GO:0000287">
    <property type="term" value="F:magnesium ion binding"/>
    <property type="evidence" value="ECO:0007669"/>
    <property type="project" value="UniProtKB-UniRule"/>
</dbReference>
<dbReference type="GO" id="GO:0008964">
    <property type="term" value="F:phosphoenolpyruvate carboxylase activity"/>
    <property type="evidence" value="ECO:0000314"/>
    <property type="project" value="UniProtKB"/>
</dbReference>
<dbReference type="GO" id="GO:0015977">
    <property type="term" value="P:carbon fixation"/>
    <property type="evidence" value="ECO:0000314"/>
    <property type="project" value="UniProtKB"/>
</dbReference>
<dbReference type="GO" id="GO:0006107">
    <property type="term" value="P:oxaloacetate metabolic process"/>
    <property type="evidence" value="ECO:0000314"/>
    <property type="project" value="UniProtKB"/>
</dbReference>
<dbReference type="GO" id="GO:0006099">
    <property type="term" value="P:tricarboxylic acid cycle"/>
    <property type="evidence" value="ECO:0007669"/>
    <property type="project" value="InterPro"/>
</dbReference>
<dbReference type="HAMAP" id="MF_01904">
    <property type="entry name" value="PEPcase_type2"/>
    <property type="match status" value="1"/>
</dbReference>
<dbReference type="InterPro" id="IPR007566">
    <property type="entry name" value="PEP_COase_arc-type"/>
</dbReference>
<dbReference type="InterPro" id="IPR015813">
    <property type="entry name" value="Pyrv/PenolPyrv_kinase-like_dom"/>
</dbReference>
<dbReference type="NCBIfam" id="TIGR02751">
    <property type="entry name" value="PEPCase_arch"/>
    <property type="match status" value="1"/>
</dbReference>
<dbReference type="Pfam" id="PF14010">
    <property type="entry name" value="PEPcase_2"/>
    <property type="match status" value="1"/>
</dbReference>
<dbReference type="PIRSF" id="PIRSF006677">
    <property type="entry name" value="UCP006677"/>
    <property type="match status" value="1"/>
</dbReference>
<dbReference type="SUPFAM" id="SSF51621">
    <property type="entry name" value="Phosphoenolpyruvate/pyruvate domain"/>
    <property type="match status" value="1"/>
</dbReference>
<sequence>MKIPCSMMTQHPDNVETYISIQQEPAEAIKGLTPQDKGGLGIEEVMIDFEGKLTPYHQTSQIALGLISNGIIPGKDVRVTPRIPNANKESVFRQLMSIMSIIETNVQSKELTGTPAISEVVVPMIETGKEISEFQDRVNSVVDMGNKNYKTKLDLNSVRIIPLVEDVPALANIDRILDEHYEIEKSKGHILKDLRIMIARSDTAMSYGLISGVLSVLMAVDGAYKWGEKHGVTISPILGCGSLPFRGHFSEENIDEILATYSGIKTFTFQSALRYDHGEEATKHAVRELKEKIAQSKPRNFSEEDKDLMKEFIGICSKHYLQTFLKVIDTVSFVSDFIPKNRDRLTKAKTGLEYNREVANLDNVADLVKDEVLKQEILSIDNSKEYAVPRAISFTGAMYTLGMPPELMGMGRALNEIKTKYGQEGIDKLLEIYPILRKDLAFAARFANGGVSKKIIDEEARQEYKEDMKYVNEILNLGLDYDFLNENEFYHTLLKTTKPIIMHLMGLEENVMRNSTEELKILNEWIVRMGKVRGSIG</sequence>
<name>CAPPA_CLOPE</name>
<comment type="function">
    <text evidence="1 2">Catalyzes the irreversible beta-carboxylation of phosphoenolpyruvate (PEP) to form oxaloacetate (OAA), a four-carbon dicarboxylic acid source for the tricarboxylic acid cycle.</text>
</comment>
<comment type="catalytic activity">
    <reaction evidence="1 2">
        <text>oxaloacetate + phosphate = phosphoenolpyruvate + hydrogencarbonate</text>
        <dbReference type="Rhea" id="RHEA:28370"/>
        <dbReference type="ChEBI" id="CHEBI:16452"/>
        <dbReference type="ChEBI" id="CHEBI:17544"/>
        <dbReference type="ChEBI" id="CHEBI:43474"/>
        <dbReference type="ChEBI" id="CHEBI:58702"/>
        <dbReference type="EC" id="4.1.1.31"/>
    </reaction>
</comment>
<comment type="cofactor">
    <cofactor evidence="1">
        <name>Mg(2+)</name>
        <dbReference type="ChEBI" id="CHEBI:18420"/>
    </cofactor>
</comment>
<comment type="subunit">
    <text evidence="2">Homodimer or homotetramer.</text>
</comment>
<comment type="similarity">
    <text evidence="1">Belongs to the PEPCase type 2 family.</text>
</comment>
<accession>Q8XLE8</accession>
<evidence type="ECO:0000255" key="1">
    <source>
        <dbReference type="HAMAP-Rule" id="MF_01904"/>
    </source>
</evidence>
<evidence type="ECO:0000269" key="2">
    <source>
    </source>
</evidence>
<evidence type="ECO:0007829" key="3">
    <source>
        <dbReference type="PDB" id="3ODM"/>
    </source>
</evidence>